<feature type="chain" id="PRO_0000111260" description="Small ribosomal subunit protein bS18">
    <location>
        <begin position="1"/>
        <end position="75"/>
    </location>
</feature>
<evidence type="ECO:0000255" key="1">
    <source>
        <dbReference type="HAMAP-Rule" id="MF_00270"/>
    </source>
</evidence>
<evidence type="ECO:0000305" key="2"/>
<sequence length="75" mass="8843">MARFFRRRKFCRFTAEGVQEIDYKDVATLKNYITEAGKIVPSRITGTSAKYQRQLARAIKRSRYLALLPYTDKHQ</sequence>
<comment type="function">
    <text evidence="1">Binds as a heterodimer with protein bS6 to the central domain of the 16S rRNA, where it helps stabilize the platform of the 30S subunit.</text>
</comment>
<comment type="subunit">
    <text evidence="1">Part of the 30S ribosomal subunit. Forms a tight heterodimer with protein bS6.</text>
</comment>
<comment type="similarity">
    <text evidence="1">Belongs to the bacterial ribosomal protein bS18 family.</text>
</comment>
<gene>
    <name evidence="1" type="primary">rpsR</name>
    <name type="ordered locus">VV1_1389</name>
</gene>
<accession>P66479</accession>
<accession>Q87L74</accession>
<accession>Q8DCL4</accession>
<proteinExistence type="inferred from homology"/>
<dbReference type="EMBL" id="AE016795">
    <property type="protein sequence ID" value="AAO09838.1"/>
    <property type="molecule type" value="Genomic_DNA"/>
</dbReference>
<dbReference type="RefSeq" id="WP_000090472.1">
    <property type="nucleotide sequence ID" value="NC_004459.3"/>
</dbReference>
<dbReference type="SMR" id="P66479"/>
<dbReference type="GeneID" id="97173128"/>
<dbReference type="KEGG" id="vvu:VV1_1389"/>
<dbReference type="HOGENOM" id="CLU_148710_2_3_6"/>
<dbReference type="Proteomes" id="UP000002275">
    <property type="component" value="Chromosome 1"/>
</dbReference>
<dbReference type="GO" id="GO:0022627">
    <property type="term" value="C:cytosolic small ribosomal subunit"/>
    <property type="evidence" value="ECO:0007669"/>
    <property type="project" value="TreeGrafter"/>
</dbReference>
<dbReference type="GO" id="GO:0070181">
    <property type="term" value="F:small ribosomal subunit rRNA binding"/>
    <property type="evidence" value="ECO:0007669"/>
    <property type="project" value="TreeGrafter"/>
</dbReference>
<dbReference type="GO" id="GO:0003735">
    <property type="term" value="F:structural constituent of ribosome"/>
    <property type="evidence" value="ECO:0007669"/>
    <property type="project" value="InterPro"/>
</dbReference>
<dbReference type="GO" id="GO:0006412">
    <property type="term" value="P:translation"/>
    <property type="evidence" value="ECO:0007669"/>
    <property type="project" value="UniProtKB-UniRule"/>
</dbReference>
<dbReference type="FunFam" id="4.10.640.10:FF:000001">
    <property type="entry name" value="30S ribosomal protein S18"/>
    <property type="match status" value="1"/>
</dbReference>
<dbReference type="Gene3D" id="4.10.640.10">
    <property type="entry name" value="Ribosomal protein S18"/>
    <property type="match status" value="1"/>
</dbReference>
<dbReference type="HAMAP" id="MF_00270">
    <property type="entry name" value="Ribosomal_bS18"/>
    <property type="match status" value="1"/>
</dbReference>
<dbReference type="InterPro" id="IPR001648">
    <property type="entry name" value="Ribosomal_bS18"/>
</dbReference>
<dbReference type="InterPro" id="IPR018275">
    <property type="entry name" value="Ribosomal_bS18_CS"/>
</dbReference>
<dbReference type="InterPro" id="IPR036870">
    <property type="entry name" value="Ribosomal_bS18_sf"/>
</dbReference>
<dbReference type="NCBIfam" id="TIGR00165">
    <property type="entry name" value="S18"/>
    <property type="match status" value="1"/>
</dbReference>
<dbReference type="PANTHER" id="PTHR13479">
    <property type="entry name" value="30S RIBOSOMAL PROTEIN S18"/>
    <property type="match status" value="1"/>
</dbReference>
<dbReference type="PANTHER" id="PTHR13479:SF40">
    <property type="entry name" value="SMALL RIBOSOMAL SUBUNIT PROTEIN BS18M"/>
    <property type="match status" value="1"/>
</dbReference>
<dbReference type="Pfam" id="PF01084">
    <property type="entry name" value="Ribosomal_S18"/>
    <property type="match status" value="1"/>
</dbReference>
<dbReference type="PRINTS" id="PR00974">
    <property type="entry name" value="RIBOSOMALS18"/>
</dbReference>
<dbReference type="SUPFAM" id="SSF46911">
    <property type="entry name" value="Ribosomal protein S18"/>
    <property type="match status" value="1"/>
</dbReference>
<dbReference type="PROSITE" id="PS00057">
    <property type="entry name" value="RIBOSOMAL_S18"/>
    <property type="match status" value="1"/>
</dbReference>
<protein>
    <recommendedName>
        <fullName evidence="1">Small ribosomal subunit protein bS18</fullName>
    </recommendedName>
    <alternativeName>
        <fullName evidence="2">30S ribosomal protein S18</fullName>
    </alternativeName>
</protein>
<name>RS18_VIBVU</name>
<organism>
    <name type="scientific">Vibrio vulnificus (strain CMCP6)</name>
    <dbReference type="NCBI Taxonomy" id="216895"/>
    <lineage>
        <taxon>Bacteria</taxon>
        <taxon>Pseudomonadati</taxon>
        <taxon>Pseudomonadota</taxon>
        <taxon>Gammaproteobacteria</taxon>
        <taxon>Vibrionales</taxon>
        <taxon>Vibrionaceae</taxon>
        <taxon>Vibrio</taxon>
    </lineage>
</organism>
<reference key="1">
    <citation type="submission" date="2002-12" db="EMBL/GenBank/DDBJ databases">
        <title>Complete genome sequence of Vibrio vulnificus CMCP6.</title>
        <authorList>
            <person name="Rhee J.H."/>
            <person name="Kim S.Y."/>
            <person name="Chung S.S."/>
            <person name="Kim J.J."/>
            <person name="Moon Y.H."/>
            <person name="Jeong H."/>
            <person name="Choy H.E."/>
        </authorList>
    </citation>
    <scope>NUCLEOTIDE SEQUENCE [LARGE SCALE GENOMIC DNA]</scope>
    <source>
        <strain>CMCP6</strain>
    </source>
</reference>
<keyword id="KW-0687">Ribonucleoprotein</keyword>
<keyword id="KW-0689">Ribosomal protein</keyword>
<keyword id="KW-0694">RNA-binding</keyword>
<keyword id="KW-0699">rRNA-binding</keyword>